<keyword id="KW-0687">Ribonucleoprotein</keyword>
<keyword id="KW-0689">Ribosomal protein</keyword>
<evidence type="ECO:0000305" key="1"/>
<gene>
    <name type="primary">ctc</name>
</gene>
<organism>
    <name type="scientific">Bacillus caldolyticus</name>
    <dbReference type="NCBI Taxonomy" id="1394"/>
    <lineage>
        <taxon>Bacteria</taxon>
        <taxon>Bacillati</taxon>
        <taxon>Bacillota</taxon>
        <taxon>Bacilli</taxon>
        <taxon>Bacillales</taxon>
        <taxon>Anoxybacillaceae</taxon>
        <taxon>Geobacillus</taxon>
        <taxon>Geobacillus thermoleovorans group</taxon>
    </lineage>
</organism>
<protein>
    <recommendedName>
        <fullName evidence="1">Large ribosomal subunit protein bL25</fullName>
    </recommendedName>
    <alternativeName>
        <fullName>General stress protein ctc</fullName>
    </alternativeName>
</protein>
<reference key="1">
    <citation type="journal article" date="1996" name="Gene">
        <title>Bacillus caldolyticus prs gene encoding phosphoribosyl-diphosphate synthase.</title>
        <authorList>
            <person name="Krath B.N."/>
            <person name="Hove-Jensen B."/>
        </authorList>
    </citation>
    <scope>NUCLEOTIDE SEQUENCE [GENOMIC DNA]</scope>
    <source>
        <strain>DSM 405 / NBRC 15313 / YP-T</strain>
    </source>
</reference>
<comment type="similarity">
    <text evidence="1">Belongs to the bacterial ribosomal protein bL25 family.</text>
</comment>
<dbReference type="EMBL" id="X83708">
    <property type="protein sequence ID" value="CAA58683.1"/>
    <property type="molecule type" value="Genomic_DNA"/>
</dbReference>
<dbReference type="PIR" id="PC4229">
    <property type="entry name" value="PC4229"/>
</dbReference>
<dbReference type="SMR" id="P42832"/>
<dbReference type="GO" id="GO:1990904">
    <property type="term" value="C:ribonucleoprotein complex"/>
    <property type="evidence" value="ECO:0007669"/>
    <property type="project" value="UniProtKB-KW"/>
</dbReference>
<dbReference type="GO" id="GO:0005840">
    <property type="term" value="C:ribosome"/>
    <property type="evidence" value="ECO:0007669"/>
    <property type="project" value="UniProtKB-KW"/>
</dbReference>
<dbReference type="GO" id="GO:0003735">
    <property type="term" value="F:structural constituent of ribosome"/>
    <property type="evidence" value="ECO:0007669"/>
    <property type="project" value="InterPro"/>
</dbReference>
<dbReference type="GO" id="GO:0006412">
    <property type="term" value="P:translation"/>
    <property type="evidence" value="ECO:0007669"/>
    <property type="project" value="InterPro"/>
</dbReference>
<dbReference type="CDD" id="cd00495">
    <property type="entry name" value="Ribosomal_L25_TL5_CTC"/>
    <property type="match status" value="1"/>
</dbReference>
<dbReference type="Gene3D" id="2.40.240.10">
    <property type="entry name" value="Ribosomal Protein L25, Chain P"/>
    <property type="match status" value="1"/>
</dbReference>
<dbReference type="InterPro" id="IPR020056">
    <property type="entry name" value="Rbsml_bL25/Gln-tRNA_synth_N"/>
</dbReference>
<dbReference type="InterPro" id="IPR011035">
    <property type="entry name" value="Ribosomal_bL25/Gln-tRNA_synth"/>
</dbReference>
<dbReference type="InterPro" id="IPR029751">
    <property type="entry name" value="Ribosomal_L25_dom"/>
</dbReference>
<dbReference type="Pfam" id="PF01386">
    <property type="entry name" value="Ribosomal_L25p"/>
    <property type="match status" value="1"/>
</dbReference>
<dbReference type="SUPFAM" id="SSF50715">
    <property type="entry name" value="Ribosomal protein L25-like"/>
    <property type="match status" value="1"/>
</dbReference>
<sequence length="59" mass="6703">MEIVLEAKERTDKKRSTLRRIRSQGGIPAILYGKKVENKMIFVTAAELEKVLREGGRTS</sequence>
<accession>P42832</accession>
<feature type="chain" id="PRO_0000181625" description="Large ribosomal subunit protein bL25">
    <location>
        <begin position="1"/>
        <end position="59" status="greater than"/>
    </location>
</feature>
<feature type="non-terminal residue">
    <location>
        <position position="59"/>
    </location>
</feature>
<name>CTC_BACCL</name>
<proteinExistence type="inferred from homology"/>